<reference key="1">
    <citation type="journal article" date="2008" name="J. Bacteriol.">
        <title>The pangenome structure of Escherichia coli: comparative genomic analysis of E. coli commensal and pathogenic isolates.</title>
        <authorList>
            <person name="Rasko D.A."/>
            <person name="Rosovitz M.J."/>
            <person name="Myers G.S.A."/>
            <person name="Mongodin E.F."/>
            <person name="Fricke W.F."/>
            <person name="Gajer P."/>
            <person name="Crabtree J."/>
            <person name="Sebaihia M."/>
            <person name="Thomson N.R."/>
            <person name="Chaudhuri R."/>
            <person name="Henderson I.R."/>
            <person name="Sperandio V."/>
            <person name="Ravel J."/>
        </authorList>
    </citation>
    <scope>NUCLEOTIDE SEQUENCE [LARGE SCALE GENOMIC DNA]</scope>
    <source>
        <strain>HS</strain>
    </source>
</reference>
<evidence type="ECO:0000255" key="1">
    <source>
        <dbReference type="HAMAP-Rule" id="MF_00133"/>
    </source>
</evidence>
<keyword id="KW-0028">Amino-acid biosynthesis</keyword>
<keyword id="KW-0057">Aromatic amino acid biosynthesis</keyword>
<keyword id="KW-0456">Lyase</keyword>
<keyword id="KW-0663">Pyridoxal phosphate</keyword>
<keyword id="KW-0822">Tryptophan biosynthesis</keyword>
<organism>
    <name type="scientific">Escherichia coli O9:H4 (strain HS)</name>
    <dbReference type="NCBI Taxonomy" id="331112"/>
    <lineage>
        <taxon>Bacteria</taxon>
        <taxon>Pseudomonadati</taxon>
        <taxon>Pseudomonadota</taxon>
        <taxon>Gammaproteobacteria</taxon>
        <taxon>Enterobacterales</taxon>
        <taxon>Enterobacteriaceae</taxon>
        <taxon>Escherichia</taxon>
    </lineage>
</organism>
<protein>
    <recommendedName>
        <fullName evidence="1">Tryptophan synthase beta chain</fullName>
        <ecNumber evidence="1">4.2.1.20</ecNumber>
    </recommendedName>
</protein>
<sequence>MTTLLNPYFGEFGGMYVPQILMPALRQLEEAFVSAQKDPEFQAQFNDLLKNYAGRPTALTKCQNITAGTNTTLYLKREDLLHGGAHKTNQVLGQALLAKRMGKTEIIAETGAGQHGVASALASALLGLKCRIYMGAKDVERQSPNVFRMRLMGAEVIPVHSGSATLKDACNEALRDWSGSYETAHYMLGTAAGPHPYPTIVREFQRMIGEETKAQILEREGRLPDAVIACVGGGSNAIGMFADFINETNVGLIGVEPGGHGIETGEHGAPLKHGRVGIYFGMKAPMMQTEDGQIEESYSISAGLDFPSVGPQHAYLNSTGRADYVSITDDEALEAFKTLCLHEGIIPALESSHALAHALKMMRENPDKEQLLVVNLSGRGDKDIFTVHDILKARGEI</sequence>
<name>TRPB_ECOHS</name>
<gene>
    <name evidence="1" type="primary">trpB</name>
    <name type="ordered locus">EcHS_A1370</name>
</gene>
<dbReference type="EC" id="4.2.1.20" evidence="1"/>
<dbReference type="EMBL" id="CP000802">
    <property type="protein sequence ID" value="ABV05701.1"/>
    <property type="molecule type" value="Genomic_DNA"/>
</dbReference>
<dbReference type="RefSeq" id="WP_000209520.1">
    <property type="nucleotide sequence ID" value="NC_009800.1"/>
</dbReference>
<dbReference type="SMR" id="A7ZZJ7"/>
<dbReference type="GeneID" id="75203373"/>
<dbReference type="KEGG" id="ecx:EcHS_A1370"/>
<dbReference type="HOGENOM" id="CLU_016734_3_1_6"/>
<dbReference type="UniPathway" id="UPA00035">
    <property type="reaction ID" value="UER00044"/>
</dbReference>
<dbReference type="GO" id="GO:0005737">
    <property type="term" value="C:cytoplasm"/>
    <property type="evidence" value="ECO:0007669"/>
    <property type="project" value="TreeGrafter"/>
</dbReference>
<dbReference type="GO" id="GO:0004834">
    <property type="term" value="F:tryptophan synthase activity"/>
    <property type="evidence" value="ECO:0007669"/>
    <property type="project" value="UniProtKB-UniRule"/>
</dbReference>
<dbReference type="CDD" id="cd06446">
    <property type="entry name" value="Trp-synth_B"/>
    <property type="match status" value="1"/>
</dbReference>
<dbReference type="FunFam" id="3.40.50.1100:FF:000001">
    <property type="entry name" value="Tryptophan synthase beta chain"/>
    <property type="match status" value="1"/>
</dbReference>
<dbReference type="FunFam" id="3.40.50.1100:FF:000004">
    <property type="entry name" value="Tryptophan synthase beta chain"/>
    <property type="match status" value="1"/>
</dbReference>
<dbReference type="Gene3D" id="3.40.50.1100">
    <property type="match status" value="2"/>
</dbReference>
<dbReference type="HAMAP" id="MF_00133">
    <property type="entry name" value="Trp_synth_beta"/>
    <property type="match status" value="1"/>
</dbReference>
<dbReference type="InterPro" id="IPR006653">
    <property type="entry name" value="Trp_synth_b_CS"/>
</dbReference>
<dbReference type="InterPro" id="IPR006654">
    <property type="entry name" value="Trp_synth_beta"/>
</dbReference>
<dbReference type="InterPro" id="IPR023026">
    <property type="entry name" value="Trp_synth_beta/beta-like"/>
</dbReference>
<dbReference type="InterPro" id="IPR001926">
    <property type="entry name" value="TrpB-like_PALP"/>
</dbReference>
<dbReference type="InterPro" id="IPR036052">
    <property type="entry name" value="TrpB-like_PALP_sf"/>
</dbReference>
<dbReference type="NCBIfam" id="TIGR00263">
    <property type="entry name" value="trpB"/>
    <property type="match status" value="1"/>
</dbReference>
<dbReference type="PANTHER" id="PTHR48077:SF3">
    <property type="entry name" value="TRYPTOPHAN SYNTHASE"/>
    <property type="match status" value="1"/>
</dbReference>
<dbReference type="PANTHER" id="PTHR48077">
    <property type="entry name" value="TRYPTOPHAN SYNTHASE-RELATED"/>
    <property type="match status" value="1"/>
</dbReference>
<dbReference type="Pfam" id="PF00291">
    <property type="entry name" value="PALP"/>
    <property type="match status" value="1"/>
</dbReference>
<dbReference type="PIRSF" id="PIRSF001413">
    <property type="entry name" value="Trp_syn_beta"/>
    <property type="match status" value="1"/>
</dbReference>
<dbReference type="SUPFAM" id="SSF53686">
    <property type="entry name" value="Tryptophan synthase beta subunit-like PLP-dependent enzymes"/>
    <property type="match status" value="1"/>
</dbReference>
<dbReference type="PROSITE" id="PS00168">
    <property type="entry name" value="TRP_SYNTHASE_BETA"/>
    <property type="match status" value="1"/>
</dbReference>
<proteinExistence type="inferred from homology"/>
<comment type="function">
    <text evidence="1">The beta subunit is responsible for the synthesis of L-tryptophan from indole and L-serine.</text>
</comment>
<comment type="catalytic activity">
    <reaction evidence="1">
        <text>(1S,2R)-1-C-(indol-3-yl)glycerol 3-phosphate + L-serine = D-glyceraldehyde 3-phosphate + L-tryptophan + H2O</text>
        <dbReference type="Rhea" id="RHEA:10532"/>
        <dbReference type="ChEBI" id="CHEBI:15377"/>
        <dbReference type="ChEBI" id="CHEBI:33384"/>
        <dbReference type="ChEBI" id="CHEBI:57912"/>
        <dbReference type="ChEBI" id="CHEBI:58866"/>
        <dbReference type="ChEBI" id="CHEBI:59776"/>
        <dbReference type="EC" id="4.2.1.20"/>
    </reaction>
</comment>
<comment type="cofactor">
    <cofactor evidence="1">
        <name>pyridoxal 5'-phosphate</name>
        <dbReference type="ChEBI" id="CHEBI:597326"/>
    </cofactor>
</comment>
<comment type="pathway">
    <text evidence="1">Amino-acid biosynthesis; L-tryptophan biosynthesis; L-tryptophan from chorismate: step 5/5.</text>
</comment>
<comment type="subunit">
    <text evidence="1">Tetramer of two alpha and two beta chains.</text>
</comment>
<comment type="similarity">
    <text evidence="1">Belongs to the TrpB family.</text>
</comment>
<feature type="chain" id="PRO_1000057861" description="Tryptophan synthase beta chain">
    <location>
        <begin position="1"/>
        <end position="397"/>
    </location>
</feature>
<feature type="modified residue" description="N6-(pyridoxal phosphate)lysine" evidence="1">
    <location>
        <position position="87"/>
    </location>
</feature>
<accession>A7ZZJ7</accession>